<protein>
    <recommendedName>
        <fullName>HTH-type transcriptional regulator SAR2658</fullName>
    </recommendedName>
</protein>
<organism>
    <name type="scientific">Staphylococcus aureus (strain MRSA252)</name>
    <dbReference type="NCBI Taxonomy" id="282458"/>
    <lineage>
        <taxon>Bacteria</taxon>
        <taxon>Bacillati</taxon>
        <taxon>Bacillota</taxon>
        <taxon>Bacilli</taxon>
        <taxon>Bacillales</taxon>
        <taxon>Staphylococcaceae</taxon>
        <taxon>Staphylococcus</taxon>
    </lineage>
</organism>
<evidence type="ECO:0000255" key="1">
    <source>
        <dbReference type="PROSITE-ProRule" id="PRU00335"/>
    </source>
</evidence>
<proteinExistence type="predicted"/>
<accession>Q6GDM3</accession>
<dbReference type="EMBL" id="BX571856">
    <property type="protein sequence ID" value="CAG41635.1"/>
    <property type="molecule type" value="Genomic_DNA"/>
</dbReference>
<dbReference type="RefSeq" id="WP_001224184.1">
    <property type="nucleotide sequence ID" value="NC_002952.2"/>
</dbReference>
<dbReference type="SMR" id="Q6GDM3"/>
<dbReference type="KEGG" id="sar:SAR2658"/>
<dbReference type="HOGENOM" id="CLU_069356_17_2_9"/>
<dbReference type="Proteomes" id="UP000000596">
    <property type="component" value="Chromosome"/>
</dbReference>
<dbReference type="GO" id="GO:0003677">
    <property type="term" value="F:DNA binding"/>
    <property type="evidence" value="ECO:0007669"/>
    <property type="project" value="UniProtKB-KW"/>
</dbReference>
<dbReference type="Gene3D" id="1.10.357.10">
    <property type="entry name" value="Tetracycline Repressor, domain 2"/>
    <property type="match status" value="1"/>
</dbReference>
<dbReference type="InterPro" id="IPR023772">
    <property type="entry name" value="DNA-bd_HTH_TetR-type_CS"/>
</dbReference>
<dbReference type="InterPro" id="IPR009057">
    <property type="entry name" value="Homeodomain-like_sf"/>
</dbReference>
<dbReference type="InterPro" id="IPR050624">
    <property type="entry name" value="HTH-type_Tx_Regulator"/>
</dbReference>
<dbReference type="InterPro" id="IPR001647">
    <property type="entry name" value="HTH_TetR"/>
</dbReference>
<dbReference type="PANTHER" id="PTHR43479">
    <property type="entry name" value="ACREF/ENVCD OPERON REPRESSOR-RELATED"/>
    <property type="match status" value="1"/>
</dbReference>
<dbReference type="PANTHER" id="PTHR43479:SF11">
    <property type="entry name" value="ACREF_ENVCD OPERON REPRESSOR-RELATED"/>
    <property type="match status" value="1"/>
</dbReference>
<dbReference type="Pfam" id="PF00440">
    <property type="entry name" value="TetR_N"/>
    <property type="match status" value="1"/>
</dbReference>
<dbReference type="PRINTS" id="PR00455">
    <property type="entry name" value="HTHTETR"/>
</dbReference>
<dbReference type="SUPFAM" id="SSF46689">
    <property type="entry name" value="Homeodomain-like"/>
    <property type="match status" value="1"/>
</dbReference>
<dbReference type="PROSITE" id="PS01081">
    <property type="entry name" value="HTH_TETR_1"/>
    <property type="match status" value="1"/>
</dbReference>
<dbReference type="PROSITE" id="PS50977">
    <property type="entry name" value="HTH_TETR_2"/>
    <property type="match status" value="1"/>
</dbReference>
<reference key="1">
    <citation type="journal article" date="2004" name="Proc. Natl. Acad. Sci. U.S.A.">
        <title>Complete genomes of two clinical Staphylococcus aureus strains: evidence for the rapid evolution of virulence and drug resistance.</title>
        <authorList>
            <person name="Holden M.T.G."/>
            <person name="Feil E.J."/>
            <person name="Lindsay J.A."/>
            <person name="Peacock S.J."/>
            <person name="Day N.P.J."/>
            <person name="Enright M.C."/>
            <person name="Foster T.J."/>
            <person name="Moore C.E."/>
            <person name="Hurst L."/>
            <person name="Atkin R."/>
            <person name="Barron A."/>
            <person name="Bason N."/>
            <person name="Bentley S.D."/>
            <person name="Chillingworth C."/>
            <person name="Chillingworth T."/>
            <person name="Churcher C."/>
            <person name="Clark L."/>
            <person name="Corton C."/>
            <person name="Cronin A."/>
            <person name="Doggett J."/>
            <person name="Dowd L."/>
            <person name="Feltwell T."/>
            <person name="Hance Z."/>
            <person name="Harris B."/>
            <person name="Hauser H."/>
            <person name="Holroyd S."/>
            <person name="Jagels K."/>
            <person name="James K.D."/>
            <person name="Lennard N."/>
            <person name="Line A."/>
            <person name="Mayes R."/>
            <person name="Moule S."/>
            <person name="Mungall K."/>
            <person name="Ormond D."/>
            <person name="Quail M.A."/>
            <person name="Rabbinowitsch E."/>
            <person name="Rutherford K.M."/>
            <person name="Sanders M."/>
            <person name="Sharp S."/>
            <person name="Simmonds M."/>
            <person name="Stevens K."/>
            <person name="Whitehead S."/>
            <person name="Barrell B.G."/>
            <person name="Spratt B.G."/>
            <person name="Parkhill J."/>
        </authorList>
    </citation>
    <scope>NUCLEOTIDE SEQUENCE [LARGE SCALE GENOMIC DNA]</scope>
    <source>
        <strain>MRSA252</strain>
    </source>
</reference>
<name>Y2658_STAAR</name>
<keyword id="KW-0238">DNA-binding</keyword>
<keyword id="KW-0804">Transcription</keyword>
<keyword id="KW-0805">Transcription regulation</keyword>
<gene>
    <name type="ordered locus">SAR2658</name>
</gene>
<feature type="chain" id="PRO_0000286691" description="HTH-type transcriptional regulator SAR2658">
    <location>
        <begin position="1"/>
        <end position="185"/>
    </location>
</feature>
<feature type="domain" description="HTH tetR-type" evidence="1">
    <location>
        <begin position="6"/>
        <end position="66"/>
    </location>
</feature>
<feature type="DNA-binding region" description="H-T-H motif" evidence="1">
    <location>
        <begin position="29"/>
        <end position="48"/>
    </location>
</feature>
<sequence length="185" mass="22490">MRKDAKENRQRIEEIAHKLFDEEGVENISMNRIAKELGIGMGTLYRHFKDKSDLCYYVIQRDLDIFITHFKQIKDDYHSNYEVMQVSLDYLLQFKIDHKALLQCIEAGNNKLRFYQSAFYQELFYFYYDLFKSDDDIYTKFKTDMLLQALSTRVFDFQIEHRNISIEAYRNYLLNIYLDEVERND</sequence>